<gene>
    <name type="primary">sarR</name>
    <name type="ordered locus">SAOUHSC_02566</name>
</gene>
<comment type="function">
    <text evidence="2 4">Negative regulator of sarA transcription at late exponential and stationary growth phases. It contributes to the modulation of target genes downstream of the sarA regulatory cascade. Also, positively regulates expression of primary transcripts RNAII and RNAIII generated by agr (virulence accessory gene regulator) locus.</text>
</comment>
<comment type="subunit">
    <text evidence="3">Homodimer.</text>
</comment>
<comment type="subcellular location">
    <subcellularLocation>
        <location>Cytoplasm</location>
    </subcellularLocation>
</comment>
<comment type="induction">
    <text>Maximally expressed at post-exponential growth phase. Level of transcription reduced during exponential growth phase in hemB (delta-aminolevulinic acid dehydratase) mutant.</text>
</comment>
<comment type="similarity">
    <text evidence="5">Belongs to the SarA family.</text>
</comment>
<name>SARR_STAA8</name>
<sequence>MSKINDINDLVNATFQVKKFFRDTKKKFNLNYEEIYILNHILRSESNEISSKEIAKCSEFKPYYLTKALQKLKDLKLLSKKRSLQDERTVIVYVTDTQKANIQKLISELEEYIKN</sequence>
<protein>
    <recommendedName>
        <fullName>HTH-type transcriptional regulator SarR</fullName>
    </recommendedName>
    <alternativeName>
        <fullName>Staphylococcal accessory regulator R</fullName>
    </alternativeName>
</protein>
<proteinExistence type="evidence at protein level"/>
<keyword id="KW-0002">3D-structure</keyword>
<keyword id="KW-0010">Activator</keyword>
<keyword id="KW-0963">Cytoplasm</keyword>
<keyword id="KW-0903">Direct protein sequencing</keyword>
<keyword id="KW-0238">DNA-binding</keyword>
<keyword id="KW-1185">Reference proteome</keyword>
<keyword id="KW-0678">Repressor</keyword>
<keyword id="KW-0804">Transcription</keyword>
<keyword id="KW-0805">Transcription regulation</keyword>
<keyword id="KW-0843">Virulence</keyword>
<dbReference type="EMBL" id="AF207701">
    <property type="protein sequence ID" value="AAG35715.1"/>
    <property type="molecule type" value="Genomic_DNA"/>
</dbReference>
<dbReference type="EMBL" id="CP000253">
    <property type="protein sequence ID" value="ABD31578.1"/>
    <property type="molecule type" value="Genomic_DNA"/>
</dbReference>
<dbReference type="RefSeq" id="WP_000036076.1">
    <property type="nucleotide sequence ID" value="NZ_LS483365.1"/>
</dbReference>
<dbReference type="RefSeq" id="YP_501027.1">
    <property type="nucleotide sequence ID" value="NC_007795.1"/>
</dbReference>
<dbReference type="PDB" id="1HSJ">
    <property type="method" value="X-ray"/>
    <property type="resolution" value="2.30 A"/>
    <property type="chains" value="A/B=1-115"/>
</dbReference>
<dbReference type="PDBsum" id="1HSJ"/>
<dbReference type="SMR" id="Q9F0R1"/>
<dbReference type="STRING" id="93061.SAOUHSC_02566"/>
<dbReference type="PaxDb" id="1280-SAXN108_2543"/>
<dbReference type="GeneID" id="3921563"/>
<dbReference type="KEGG" id="sao:SAOUHSC_02566"/>
<dbReference type="PATRIC" id="fig|93061.5.peg.2315"/>
<dbReference type="eggNOG" id="COG1846">
    <property type="taxonomic scope" value="Bacteria"/>
</dbReference>
<dbReference type="HOGENOM" id="CLU_164084_0_0_9"/>
<dbReference type="OrthoDB" id="2408991at2"/>
<dbReference type="EvolutionaryTrace" id="Q9F0R1"/>
<dbReference type="PRO" id="PR:Q9F0R1"/>
<dbReference type="Proteomes" id="UP000008816">
    <property type="component" value="Chromosome"/>
</dbReference>
<dbReference type="GO" id="GO:0005737">
    <property type="term" value="C:cytoplasm"/>
    <property type="evidence" value="ECO:0007669"/>
    <property type="project" value="UniProtKB-SubCell"/>
</dbReference>
<dbReference type="GO" id="GO:0003677">
    <property type="term" value="F:DNA binding"/>
    <property type="evidence" value="ECO:0007669"/>
    <property type="project" value="UniProtKB-KW"/>
</dbReference>
<dbReference type="GO" id="GO:0003700">
    <property type="term" value="F:DNA-binding transcription factor activity"/>
    <property type="evidence" value="ECO:0007669"/>
    <property type="project" value="InterPro"/>
</dbReference>
<dbReference type="GO" id="GO:0006355">
    <property type="term" value="P:regulation of DNA-templated transcription"/>
    <property type="evidence" value="ECO:0000318"/>
    <property type="project" value="GO_Central"/>
</dbReference>
<dbReference type="GO" id="GO:0006950">
    <property type="term" value="P:response to stress"/>
    <property type="evidence" value="ECO:0000318"/>
    <property type="project" value="GO_Central"/>
</dbReference>
<dbReference type="FunFam" id="1.10.10.10:FF:000578">
    <property type="entry name" value="HTH-type transcriptional regulator SarR"/>
    <property type="match status" value="1"/>
</dbReference>
<dbReference type="Gene3D" id="1.10.10.10">
    <property type="entry name" value="Winged helix-like DNA-binding domain superfamily/Winged helix DNA-binding domain"/>
    <property type="match status" value="1"/>
</dbReference>
<dbReference type="InterPro" id="IPR039422">
    <property type="entry name" value="MarR/SlyA-like"/>
</dbReference>
<dbReference type="InterPro" id="IPR010166">
    <property type="entry name" value="SarA/Rot_dom"/>
</dbReference>
<dbReference type="InterPro" id="IPR055166">
    <property type="entry name" value="Transc_reg_Sar_Rot_HTH"/>
</dbReference>
<dbReference type="InterPro" id="IPR036388">
    <property type="entry name" value="WH-like_DNA-bd_sf"/>
</dbReference>
<dbReference type="InterPro" id="IPR036390">
    <property type="entry name" value="WH_DNA-bd_sf"/>
</dbReference>
<dbReference type="NCBIfam" id="TIGR01889">
    <property type="entry name" value="Staph_reg_Sar"/>
    <property type="match status" value="1"/>
</dbReference>
<dbReference type="PANTHER" id="PTHR33164:SF56">
    <property type="entry name" value="HTH-TYPE TRANSCRIPTIONAL REGULATOR MHQR"/>
    <property type="match status" value="1"/>
</dbReference>
<dbReference type="PANTHER" id="PTHR33164">
    <property type="entry name" value="TRANSCRIPTIONAL REGULATOR, MARR FAMILY"/>
    <property type="match status" value="1"/>
</dbReference>
<dbReference type="Pfam" id="PF22381">
    <property type="entry name" value="Staph_reg_Sar_Rot"/>
    <property type="match status" value="1"/>
</dbReference>
<dbReference type="SUPFAM" id="SSF46785">
    <property type="entry name" value="Winged helix' DNA-binding domain"/>
    <property type="match status" value="1"/>
</dbReference>
<organism>
    <name type="scientific">Staphylococcus aureus (strain NCTC 8325 / PS 47)</name>
    <dbReference type="NCBI Taxonomy" id="93061"/>
    <lineage>
        <taxon>Bacteria</taxon>
        <taxon>Bacillati</taxon>
        <taxon>Bacillota</taxon>
        <taxon>Bacilli</taxon>
        <taxon>Bacillales</taxon>
        <taxon>Staphylococcaceae</taxon>
        <taxon>Staphylococcus</taxon>
    </lineage>
</organism>
<evidence type="ECO:0000255" key="1"/>
<evidence type="ECO:0000269" key="2">
    <source>
    </source>
</evidence>
<evidence type="ECO:0000269" key="3">
    <source>
    </source>
</evidence>
<evidence type="ECO:0000269" key="4">
    <source>
    </source>
</evidence>
<evidence type="ECO:0000305" key="5"/>
<evidence type="ECO:0007829" key="6">
    <source>
        <dbReference type="PDB" id="1HSJ"/>
    </source>
</evidence>
<accession>Q9F0R1</accession>
<accession>Q2G271</accession>
<reference key="1">
    <citation type="journal article" date="2001" name="Infect. Immun.">
        <title>Characterization of sarR, a modulator of sar expression in Staphylococcus aureus.</title>
        <authorList>
            <person name="Manna A.C."/>
            <person name="Cheung A.L."/>
        </authorList>
    </citation>
    <scope>NUCLEOTIDE SEQUENCE [GENOMIC DNA]</scope>
    <scope>PROTEIN SEQUENCE OF 2-15</scope>
    <scope>FUNCTION</scope>
</reference>
<reference key="2">
    <citation type="book" date="2006" name="Gram positive pathogens, 2nd edition">
        <title>The Staphylococcus aureus NCTC 8325 genome.</title>
        <editorList>
            <person name="Fischetti V."/>
            <person name="Novick R."/>
            <person name="Ferretti J."/>
            <person name="Portnoy D."/>
            <person name="Rood J."/>
        </editorList>
        <authorList>
            <person name="Gillaspy A.F."/>
            <person name="Worrell V."/>
            <person name="Orvis J."/>
            <person name="Roe B.A."/>
            <person name="Dyer D.W."/>
            <person name="Iandolo J.J."/>
        </authorList>
    </citation>
    <scope>NUCLEOTIDE SEQUENCE [LARGE SCALE GENOMIC DNA]</scope>
    <source>
        <strain>NCTC 8325 / PS 47</strain>
    </source>
</reference>
<reference key="3">
    <citation type="journal article" date="2005" name="J. Bacteriol.">
        <title>Sigma B activity in a Staphylococcus aureus hemB mutant.</title>
        <authorList>
            <person name="Senn M.M."/>
            <person name="Bischoff M."/>
            <person name="von Eiff C."/>
            <person name="Berger-Baechi B."/>
        </authorList>
    </citation>
    <scope>TRANSCRIPTION PROFILING</scope>
</reference>
<reference key="4">
    <citation type="journal article" date="2006" name="Mol. Microbiol.">
        <title>Transcriptional regulation of the agr locus and the identification of DNA binding residues of the global regulatory protein SarR in Staphylococcus aureus.</title>
        <authorList>
            <person name="Manna A.C."/>
            <person name="Cheung A.L."/>
        </authorList>
    </citation>
    <scope>FUNCTION</scope>
    <scope>MUTAGENESIS OF ASP-6; ASP-9; LYS-19; LYS-25; LEU-38; LYS-52; LYS-56; LYS-61; LYS-67; LEU-72; LYS-80; ARG-82; ASP-86; GLU-87; ARG-88; GLN-98; LEU-105; GLU-108; GLU-110 AND GLU-111</scope>
</reference>
<reference key="5">
    <citation type="journal article" date="2001" name="Proc. Natl. Acad. Sci. U.S.A.">
        <title>Crystal structure of the SarR protein from Staphylococcus aureus.</title>
        <authorList>
            <person name="Liu Y."/>
            <person name="Manna A.C."/>
            <person name="Li R."/>
            <person name="Martin W.E."/>
            <person name="Murphy R.C."/>
            <person name="Cheung A.L."/>
            <person name="Zhang G."/>
        </authorList>
    </citation>
    <scope>X-RAY CRYSTALLOGRAPHY (2.3 ANGSTROMS)</scope>
    <scope>SUBUNIT</scope>
</reference>
<feature type="initiator methionine" description="Removed" evidence="2">
    <location>
        <position position="1"/>
    </location>
</feature>
<feature type="chain" id="PRO_0000219583" description="HTH-type transcriptional regulator SarR">
    <location>
        <begin position="2"/>
        <end position="115"/>
    </location>
</feature>
<feature type="DNA-binding region" description="H-T-H motif" evidence="1">
    <location>
        <begin position="51"/>
        <end position="74"/>
    </location>
</feature>
<feature type="mutagenesis site" description="Reduces DNA binding to the agr promoter." evidence="4">
    <original>D</original>
    <variation>A</variation>
    <location>
        <position position="6"/>
    </location>
</feature>
<feature type="mutagenesis site" description="No effect on DNA binding to the agr promoter." evidence="4">
    <original>D</original>
    <variation>A</variation>
    <location>
        <position position="9"/>
    </location>
</feature>
<feature type="mutagenesis site" description="Reduces DNA binding to the agr promoter." evidence="4">
    <original>K</original>
    <variation>A</variation>
    <location>
        <position position="19"/>
    </location>
</feature>
<feature type="mutagenesis site" description="No effect on DNA binding to the agr promoter." evidence="4">
    <original>K</original>
    <variation>A</variation>
    <location>
        <position position="25"/>
    </location>
</feature>
<feature type="mutagenesis site" description="No effect on DNA binding to the agr promoter." evidence="4">
    <original>L</original>
    <variation>A</variation>
    <location>
        <position position="38"/>
    </location>
</feature>
<feature type="mutagenesis site" description="Abolishes DNA binding to the agr promoter." evidence="4">
    <original>K</original>
    <variation>A</variation>
    <location>
        <position position="52"/>
    </location>
</feature>
<feature type="mutagenesis site" description="No effect on DNA binding to the agr promoter." evidence="4">
    <original>K</original>
    <variation>A</variation>
    <location>
        <position position="56"/>
    </location>
</feature>
<feature type="mutagenesis site" description="No effect on DNA binding to the agr promoter." evidence="4">
    <original>K</original>
    <variation>A</variation>
    <location>
        <position position="61"/>
    </location>
</feature>
<feature type="mutagenesis site" description="Reduces DNA binding to the agr promoter, but abolishes DNA binding to the sarA promoter." evidence="4">
    <original>K</original>
    <variation>A</variation>
    <location>
        <position position="67"/>
    </location>
</feature>
<feature type="mutagenesis site" description="Reduces DNA binding to the agr promoter, but abolishes DNA binding to the sarA promoter." evidence="4">
    <original>L</original>
    <variation>G</variation>
    <location>
        <position position="72"/>
    </location>
</feature>
<feature type="mutagenesis site" description="Abolishes DNA binding to the agr promoter." evidence="4">
    <original>K</original>
    <variation>G</variation>
    <location>
        <position position="80"/>
    </location>
</feature>
<feature type="mutagenesis site" description="Abolishes DNA binding to the agr promoter." evidence="4">
    <original>R</original>
    <variation>A</variation>
    <location>
        <position position="82"/>
    </location>
</feature>
<feature type="mutagenesis site" description="No effect on DNA binding to the agr promoter, but reduces DNA binding to the sarA promoter." evidence="4">
    <original>D</original>
    <variation>A</variation>
    <location>
        <position position="86"/>
    </location>
</feature>
<feature type="mutagenesis site" description="No effect on DNA binding to the agr promoter." evidence="4">
    <original>E</original>
    <variation>A</variation>
    <location>
        <position position="87"/>
    </location>
</feature>
<feature type="mutagenesis site" description="Abolishes DNA binding to the agr promoter." evidence="4">
    <original>R</original>
    <variation>A</variation>
    <location>
        <position position="88"/>
    </location>
</feature>
<feature type="mutagenesis site" description="Reduces DNA binding to both agr and sarA promoters." evidence="4">
    <original>Q</original>
    <variation>A</variation>
    <location>
        <position position="98"/>
    </location>
</feature>
<feature type="mutagenesis site" description="Abolishes DNA binding to the agr promoter." evidence="4">
    <original>L</original>
    <variation>G</variation>
    <location>
        <position position="105"/>
    </location>
</feature>
<feature type="mutagenesis site" description="No effect on DNA binding to the agr promoter." evidence="4">
    <original>E</original>
    <variation>A</variation>
    <location>
        <position position="108"/>
    </location>
</feature>
<feature type="mutagenesis site" description="No effect on DNA binding to the agr promoter." evidence="4">
    <original>E</original>
    <variation>A</variation>
    <location>
        <position position="110"/>
    </location>
</feature>
<feature type="mutagenesis site" description="No effect on DNA binding to the agr promoter." evidence="4">
    <original>E</original>
    <variation>A</variation>
    <location>
        <position position="111"/>
    </location>
</feature>
<feature type="helix" evidence="6">
    <location>
        <begin position="7"/>
        <end position="24"/>
    </location>
</feature>
<feature type="strand" evidence="6">
    <location>
        <begin position="25"/>
        <end position="27"/>
    </location>
</feature>
<feature type="helix" evidence="6">
    <location>
        <begin position="32"/>
        <end position="42"/>
    </location>
</feature>
<feature type="strand" evidence="6">
    <location>
        <begin position="47"/>
        <end position="50"/>
    </location>
</feature>
<feature type="helix" evidence="6">
    <location>
        <begin position="51"/>
        <end position="56"/>
    </location>
</feature>
<feature type="helix" evidence="6">
    <location>
        <begin position="62"/>
        <end position="73"/>
    </location>
</feature>
<feature type="strand" evidence="6">
    <location>
        <begin position="85"/>
        <end position="88"/>
    </location>
</feature>
<feature type="strand" evidence="6">
    <location>
        <begin position="91"/>
        <end position="93"/>
    </location>
</feature>
<feature type="helix" evidence="6">
    <location>
        <begin position="98"/>
        <end position="109"/>
    </location>
</feature>
<feature type="helix" evidence="6">
    <location>
        <begin position="110"/>
        <end position="112"/>
    </location>
</feature>